<name>RL15_YERPS</name>
<sequence>MRLNTLSPAEGAKHAPKRVGRGIGSGLGKTAGRGHKGQNSRSGGGVRRGFEGGQMPLYRRLPKFGFTSRKAMITAEVRLSELALVEGDVIDLNTLKAANVVGIQMEFVKVILSGEVNRAVTLRGLRVTKGARAAIEAAGGKIEE</sequence>
<accession>Q664U0</accession>
<dbReference type="EMBL" id="BX936398">
    <property type="protein sequence ID" value="CAH22917.1"/>
    <property type="molecule type" value="Genomic_DNA"/>
</dbReference>
<dbReference type="RefSeq" id="WP_002213341.1">
    <property type="nucleotide sequence ID" value="NZ_CP009712.1"/>
</dbReference>
<dbReference type="SMR" id="Q664U0"/>
<dbReference type="GeneID" id="96663177"/>
<dbReference type="KEGG" id="ypo:BZ17_2908"/>
<dbReference type="KEGG" id="yps:YPTB3679"/>
<dbReference type="PATRIC" id="fig|273123.14.peg.3049"/>
<dbReference type="Proteomes" id="UP000001011">
    <property type="component" value="Chromosome"/>
</dbReference>
<dbReference type="GO" id="GO:0022625">
    <property type="term" value="C:cytosolic large ribosomal subunit"/>
    <property type="evidence" value="ECO:0007669"/>
    <property type="project" value="TreeGrafter"/>
</dbReference>
<dbReference type="GO" id="GO:0019843">
    <property type="term" value="F:rRNA binding"/>
    <property type="evidence" value="ECO:0007669"/>
    <property type="project" value="UniProtKB-UniRule"/>
</dbReference>
<dbReference type="GO" id="GO:0003735">
    <property type="term" value="F:structural constituent of ribosome"/>
    <property type="evidence" value="ECO:0007669"/>
    <property type="project" value="InterPro"/>
</dbReference>
<dbReference type="GO" id="GO:0006412">
    <property type="term" value="P:translation"/>
    <property type="evidence" value="ECO:0007669"/>
    <property type="project" value="UniProtKB-UniRule"/>
</dbReference>
<dbReference type="FunFam" id="3.100.10.10:FF:000003">
    <property type="entry name" value="50S ribosomal protein L15"/>
    <property type="match status" value="1"/>
</dbReference>
<dbReference type="Gene3D" id="3.100.10.10">
    <property type="match status" value="1"/>
</dbReference>
<dbReference type="HAMAP" id="MF_01341">
    <property type="entry name" value="Ribosomal_uL15"/>
    <property type="match status" value="1"/>
</dbReference>
<dbReference type="InterPro" id="IPR030878">
    <property type="entry name" value="Ribosomal_uL15"/>
</dbReference>
<dbReference type="InterPro" id="IPR021131">
    <property type="entry name" value="Ribosomal_uL15/eL18"/>
</dbReference>
<dbReference type="InterPro" id="IPR036227">
    <property type="entry name" value="Ribosomal_uL15/eL18_sf"/>
</dbReference>
<dbReference type="InterPro" id="IPR005749">
    <property type="entry name" value="Ribosomal_uL15_bac-type"/>
</dbReference>
<dbReference type="InterPro" id="IPR001196">
    <property type="entry name" value="Ribosomal_uL15_CS"/>
</dbReference>
<dbReference type="NCBIfam" id="TIGR01071">
    <property type="entry name" value="rplO_bact"/>
    <property type="match status" value="1"/>
</dbReference>
<dbReference type="PANTHER" id="PTHR12934">
    <property type="entry name" value="50S RIBOSOMAL PROTEIN L15"/>
    <property type="match status" value="1"/>
</dbReference>
<dbReference type="PANTHER" id="PTHR12934:SF11">
    <property type="entry name" value="LARGE RIBOSOMAL SUBUNIT PROTEIN UL15M"/>
    <property type="match status" value="1"/>
</dbReference>
<dbReference type="Pfam" id="PF00828">
    <property type="entry name" value="Ribosomal_L27A"/>
    <property type="match status" value="1"/>
</dbReference>
<dbReference type="SUPFAM" id="SSF52080">
    <property type="entry name" value="Ribosomal proteins L15p and L18e"/>
    <property type="match status" value="1"/>
</dbReference>
<dbReference type="PROSITE" id="PS00475">
    <property type="entry name" value="RIBOSOMAL_L15"/>
    <property type="match status" value="1"/>
</dbReference>
<reference key="1">
    <citation type="journal article" date="2004" name="Proc. Natl. Acad. Sci. U.S.A.">
        <title>Insights into the evolution of Yersinia pestis through whole-genome comparison with Yersinia pseudotuberculosis.</title>
        <authorList>
            <person name="Chain P.S.G."/>
            <person name="Carniel E."/>
            <person name="Larimer F.W."/>
            <person name="Lamerdin J."/>
            <person name="Stoutland P.O."/>
            <person name="Regala W.M."/>
            <person name="Georgescu A.M."/>
            <person name="Vergez L.M."/>
            <person name="Land M.L."/>
            <person name="Motin V.L."/>
            <person name="Brubaker R.R."/>
            <person name="Fowler J."/>
            <person name="Hinnebusch J."/>
            <person name="Marceau M."/>
            <person name="Medigue C."/>
            <person name="Simonet M."/>
            <person name="Chenal-Francisque V."/>
            <person name="Souza B."/>
            <person name="Dacheux D."/>
            <person name="Elliott J.M."/>
            <person name="Derbise A."/>
            <person name="Hauser L.J."/>
            <person name="Garcia E."/>
        </authorList>
    </citation>
    <scope>NUCLEOTIDE SEQUENCE [LARGE SCALE GENOMIC DNA]</scope>
    <source>
        <strain>IP32953</strain>
    </source>
</reference>
<proteinExistence type="inferred from homology"/>
<comment type="function">
    <text evidence="1">Binds to the 23S rRNA.</text>
</comment>
<comment type="subunit">
    <text evidence="1">Part of the 50S ribosomal subunit.</text>
</comment>
<comment type="similarity">
    <text evidence="1">Belongs to the universal ribosomal protein uL15 family.</text>
</comment>
<evidence type="ECO:0000255" key="1">
    <source>
        <dbReference type="HAMAP-Rule" id="MF_01341"/>
    </source>
</evidence>
<evidence type="ECO:0000256" key="2">
    <source>
        <dbReference type="SAM" id="MobiDB-lite"/>
    </source>
</evidence>
<evidence type="ECO:0000305" key="3"/>
<feature type="chain" id="PRO_0000104856" description="Large ribosomal subunit protein uL15">
    <location>
        <begin position="1"/>
        <end position="144"/>
    </location>
</feature>
<feature type="region of interest" description="Disordered" evidence="2">
    <location>
        <begin position="1"/>
        <end position="52"/>
    </location>
</feature>
<feature type="compositionally biased region" description="Gly residues" evidence="2">
    <location>
        <begin position="21"/>
        <end position="31"/>
    </location>
</feature>
<gene>
    <name evidence="1" type="primary">rplO</name>
    <name type="ordered locus">YPTB3679</name>
</gene>
<organism>
    <name type="scientific">Yersinia pseudotuberculosis serotype I (strain IP32953)</name>
    <dbReference type="NCBI Taxonomy" id="273123"/>
    <lineage>
        <taxon>Bacteria</taxon>
        <taxon>Pseudomonadati</taxon>
        <taxon>Pseudomonadota</taxon>
        <taxon>Gammaproteobacteria</taxon>
        <taxon>Enterobacterales</taxon>
        <taxon>Yersiniaceae</taxon>
        <taxon>Yersinia</taxon>
    </lineage>
</organism>
<protein>
    <recommendedName>
        <fullName evidence="1">Large ribosomal subunit protein uL15</fullName>
    </recommendedName>
    <alternativeName>
        <fullName evidence="3">50S ribosomal protein L15</fullName>
    </alternativeName>
</protein>
<keyword id="KW-0687">Ribonucleoprotein</keyword>
<keyword id="KW-0689">Ribosomal protein</keyword>
<keyword id="KW-0694">RNA-binding</keyword>
<keyword id="KW-0699">rRNA-binding</keyword>